<name>OTC_CENSY</name>
<organism>
    <name type="scientific">Cenarchaeum symbiosum (strain A)</name>
    <dbReference type="NCBI Taxonomy" id="414004"/>
    <lineage>
        <taxon>Archaea</taxon>
        <taxon>Nitrososphaerota</taxon>
        <taxon>Candidatus Cenarchaeales</taxon>
        <taxon>Candidatus Cenarchaeaceae</taxon>
        <taxon>Candidatus Cenarchaeum</taxon>
    </lineage>
</organism>
<accession>A0RUE9</accession>
<feature type="chain" id="PRO_1000137089" description="Ornithine carbamoyltransferase">
    <location>
        <begin position="1"/>
        <end position="301"/>
    </location>
</feature>
<feature type="binding site" evidence="2">
    <location>
        <begin position="53"/>
        <end position="56"/>
    </location>
    <ligand>
        <name>carbamoyl phosphate</name>
        <dbReference type="ChEBI" id="CHEBI:58228"/>
    </ligand>
</feature>
<feature type="binding site" evidence="2">
    <location>
        <position position="80"/>
    </location>
    <ligand>
        <name>carbamoyl phosphate</name>
        <dbReference type="ChEBI" id="CHEBI:58228"/>
    </ligand>
</feature>
<feature type="binding site" evidence="2">
    <location>
        <position position="104"/>
    </location>
    <ligand>
        <name>carbamoyl phosphate</name>
        <dbReference type="ChEBI" id="CHEBI:58228"/>
    </ligand>
</feature>
<feature type="binding site" evidence="2">
    <location>
        <begin position="131"/>
        <end position="134"/>
    </location>
    <ligand>
        <name>carbamoyl phosphate</name>
        <dbReference type="ChEBI" id="CHEBI:58228"/>
    </ligand>
</feature>
<feature type="binding site" evidence="2">
    <location>
        <position position="162"/>
    </location>
    <ligand>
        <name>L-ornithine</name>
        <dbReference type="ChEBI" id="CHEBI:46911"/>
    </ligand>
</feature>
<feature type="binding site" evidence="2">
    <location>
        <position position="221"/>
    </location>
    <ligand>
        <name>L-ornithine</name>
        <dbReference type="ChEBI" id="CHEBI:46911"/>
    </ligand>
</feature>
<feature type="binding site" evidence="2">
    <location>
        <begin position="225"/>
        <end position="226"/>
    </location>
    <ligand>
        <name>L-ornithine</name>
        <dbReference type="ChEBI" id="CHEBI:46911"/>
    </ligand>
</feature>
<feature type="binding site" evidence="2">
    <location>
        <begin position="260"/>
        <end position="261"/>
    </location>
    <ligand>
        <name>carbamoyl phosphate</name>
        <dbReference type="ChEBI" id="CHEBI:58228"/>
    </ligand>
</feature>
<feature type="binding site" evidence="2">
    <location>
        <position position="288"/>
    </location>
    <ligand>
        <name>carbamoyl phosphate</name>
        <dbReference type="ChEBI" id="CHEBI:58228"/>
    </ligand>
</feature>
<gene>
    <name evidence="2" type="primary">argF</name>
    <name type="ordered locus">CENSYa_0330</name>
</gene>
<protein>
    <recommendedName>
        <fullName evidence="2">Ornithine carbamoyltransferase</fullName>
        <shortName evidence="2">OTCase</shortName>
        <ecNumber evidence="2">2.1.3.3</ecNumber>
    </recommendedName>
</protein>
<sequence length="301" mass="32590">MKIRSKDLLTGAELDRKEILGIIESAIRLKKGGRSKAHPLDGRTLAMVFQKPSTRTRVSFAAGMFQLGGEAIYLPPGDMQLSRGETIPDTARALSGYVDVIVARVFGHETIEEIAASASVPVINGLSDTFHPCQILADLMTIKERKGRLKGLRAAWIGDGNNVCNSLLYGCAAVGIDISVATPAVFRPIPGVVDKCRESIDVKLTTDPAEAAAGADIVFTDTFASIHNMDKERERKFLPKYRVNAPLMKKAADDAIFMHCLPAKRGQEVDGEVIDGPQSAVWDEAENRLHSQKALLLALGI</sequence>
<reference key="1">
    <citation type="journal article" date="2006" name="Proc. Natl. Acad. Sci. U.S.A.">
        <title>Genomic analysis of the uncultivated marine crenarchaeote Cenarchaeum symbiosum.</title>
        <authorList>
            <person name="Hallam S.J."/>
            <person name="Konstantinidis K.T."/>
            <person name="Putnam N."/>
            <person name="Schleper C."/>
            <person name="Watanabe Y."/>
            <person name="Sugahara J."/>
            <person name="Preston C."/>
            <person name="de la Torre J."/>
            <person name="Richardson P.M."/>
            <person name="DeLong E.F."/>
        </authorList>
    </citation>
    <scope>NUCLEOTIDE SEQUENCE [LARGE SCALE GENOMIC DNA]</scope>
    <source>
        <strain>A</strain>
    </source>
</reference>
<proteinExistence type="inferred from homology"/>
<comment type="function">
    <text evidence="1">Reversibly catalyzes the transfer of the carbamoyl group from carbamoyl phosphate (CP) to the N(epsilon) atom of ornithine (ORN) to produce L-citrulline.</text>
</comment>
<comment type="catalytic activity">
    <reaction evidence="2">
        <text>carbamoyl phosphate + L-ornithine = L-citrulline + phosphate + H(+)</text>
        <dbReference type="Rhea" id="RHEA:19513"/>
        <dbReference type="ChEBI" id="CHEBI:15378"/>
        <dbReference type="ChEBI" id="CHEBI:43474"/>
        <dbReference type="ChEBI" id="CHEBI:46911"/>
        <dbReference type="ChEBI" id="CHEBI:57743"/>
        <dbReference type="ChEBI" id="CHEBI:58228"/>
        <dbReference type="EC" id="2.1.3.3"/>
    </reaction>
</comment>
<comment type="pathway">
    <text evidence="2">Amino-acid biosynthesis; L-arginine biosynthesis; L-arginine from L-ornithine and carbamoyl phosphate: step 1/3.</text>
</comment>
<comment type="subcellular location">
    <subcellularLocation>
        <location evidence="2">Cytoplasm</location>
    </subcellularLocation>
</comment>
<comment type="similarity">
    <text evidence="2">Belongs to the aspartate/ornithine carbamoyltransferase superfamily. OTCase family.</text>
</comment>
<dbReference type="EC" id="2.1.3.3" evidence="2"/>
<dbReference type="EMBL" id="DP000238">
    <property type="protein sequence ID" value="ABK76966.1"/>
    <property type="molecule type" value="Genomic_DNA"/>
</dbReference>
<dbReference type="SMR" id="A0RUE9"/>
<dbReference type="STRING" id="414004.CENSYa_0330"/>
<dbReference type="EnsemblBacteria" id="ABK76966">
    <property type="protein sequence ID" value="ABK76966"/>
    <property type="gene ID" value="CENSYa_0330"/>
</dbReference>
<dbReference type="KEGG" id="csy:CENSYa_0330"/>
<dbReference type="PATRIC" id="fig|414004.10.peg.295"/>
<dbReference type="HOGENOM" id="CLU_043846_3_2_2"/>
<dbReference type="UniPathway" id="UPA00068">
    <property type="reaction ID" value="UER00112"/>
</dbReference>
<dbReference type="Proteomes" id="UP000000758">
    <property type="component" value="Chromosome"/>
</dbReference>
<dbReference type="GO" id="GO:0005737">
    <property type="term" value="C:cytoplasm"/>
    <property type="evidence" value="ECO:0007669"/>
    <property type="project" value="UniProtKB-SubCell"/>
</dbReference>
<dbReference type="GO" id="GO:0016597">
    <property type="term" value="F:amino acid binding"/>
    <property type="evidence" value="ECO:0007669"/>
    <property type="project" value="InterPro"/>
</dbReference>
<dbReference type="GO" id="GO:0004585">
    <property type="term" value="F:ornithine carbamoyltransferase activity"/>
    <property type="evidence" value="ECO:0007669"/>
    <property type="project" value="UniProtKB-UniRule"/>
</dbReference>
<dbReference type="GO" id="GO:0042450">
    <property type="term" value="P:arginine biosynthetic process via ornithine"/>
    <property type="evidence" value="ECO:0007669"/>
    <property type="project" value="TreeGrafter"/>
</dbReference>
<dbReference type="GO" id="GO:0019240">
    <property type="term" value="P:citrulline biosynthetic process"/>
    <property type="evidence" value="ECO:0007669"/>
    <property type="project" value="TreeGrafter"/>
</dbReference>
<dbReference type="GO" id="GO:0006526">
    <property type="term" value="P:L-arginine biosynthetic process"/>
    <property type="evidence" value="ECO:0007669"/>
    <property type="project" value="UniProtKB-UniRule"/>
</dbReference>
<dbReference type="FunFam" id="3.40.50.1370:FF:000008">
    <property type="entry name" value="Ornithine carbamoyltransferase"/>
    <property type="match status" value="1"/>
</dbReference>
<dbReference type="Gene3D" id="3.40.50.1370">
    <property type="entry name" value="Aspartate/ornithine carbamoyltransferase"/>
    <property type="match status" value="2"/>
</dbReference>
<dbReference type="HAMAP" id="MF_01109">
    <property type="entry name" value="OTCase"/>
    <property type="match status" value="1"/>
</dbReference>
<dbReference type="InterPro" id="IPR006132">
    <property type="entry name" value="Asp/Orn_carbamoyltranf_P-bd"/>
</dbReference>
<dbReference type="InterPro" id="IPR006130">
    <property type="entry name" value="Asp/Orn_carbamoylTrfase"/>
</dbReference>
<dbReference type="InterPro" id="IPR036901">
    <property type="entry name" value="Asp/Orn_carbamoylTrfase_sf"/>
</dbReference>
<dbReference type="InterPro" id="IPR006131">
    <property type="entry name" value="Asp_carbamoyltransf_Asp/Orn-bd"/>
</dbReference>
<dbReference type="InterPro" id="IPR002292">
    <property type="entry name" value="Orn/put_carbamltrans"/>
</dbReference>
<dbReference type="InterPro" id="IPR024904">
    <property type="entry name" value="OTCase_ArgI"/>
</dbReference>
<dbReference type="NCBIfam" id="TIGR00658">
    <property type="entry name" value="orni_carb_tr"/>
    <property type="match status" value="1"/>
</dbReference>
<dbReference type="NCBIfam" id="NF001986">
    <property type="entry name" value="PRK00779.1"/>
    <property type="match status" value="1"/>
</dbReference>
<dbReference type="PANTHER" id="PTHR45753">
    <property type="entry name" value="ORNITHINE CARBAMOYLTRANSFERASE, MITOCHONDRIAL"/>
    <property type="match status" value="1"/>
</dbReference>
<dbReference type="PANTHER" id="PTHR45753:SF3">
    <property type="entry name" value="ORNITHINE TRANSCARBAMYLASE, MITOCHONDRIAL"/>
    <property type="match status" value="1"/>
</dbReference>
<dbReference type="Pfam" id="PF00185">
    <property type="entry name" value="OTCace"/>
    <property type="match status" value="1"/>
</dbReference>
<dbReference type="Pfam" id="PF02729">
    <property type="entry name" value="OTCace_N"/>
    <property type="match status" value="1"/>
</dbReference>
<dbReference type="PRINTS" id="PR00100">
    <property type="entry name" value="AOTCASE"/>
</dbReference>
<dbReference type="PRINTS" id="PR00102">
    <property type="entry name" value="OTCASE"/>
</dbReference>
<dbReference type="SUPFAM" id="SSF53671">
    <property type="entry name" value="Aspartate/ornithine carbamoyltransferase"/>
    <property type="match status" value="1"/>
</dbReference>
<dbReference type="PROSITE" id="PS00097">
    <property type="entry name" value="CARBAMOYLTRANSFERASE"/>
    <property type="match status" value="1"/>
</dbReference>
<keyword id="KW-0028">Amino-acid biosynthesis</keyword>
<keyword id="KW-0055">Arginine biosynthesis</keyword>
<keyword id="KW-0963">Cytoplasm</keyword>
<keyword id="KW-1185">Reference proteome</keyword>
<keyword id="KW-0808">Transferase</keyword>
<evidence type="ECO:0000250" key="1"/>
<evidence type="ECO:0000255" key="2">
    <source>
        <dbReference type="HAMAP-Rule" id="MF_01109"/>
    </source>
</evidence>